<accession>Q03068</accession>
<reference key="1">
    <citation type="journal article" date="1992" name="J. Gen. Virol.">
        <title>The complete sequence of African horsesickness virus serotype 4 (vaccine strain) RNA segment 5 and its predicted polypeptide compared with NS1 of bluetongue virus.</title>
        <authorList>
            <person name="Mizukoshi N."/>
            <person name="Sakamoto K."/>
            <person name="Iwata A."/>
            <person name="Tsuchiya T."/>
            <person name="Ueda S."/>
            <person name="Watanabe T."/>
            <person name="Kamada M."/>
            <person name="Fukusho A."/>
        </authorList>
    </citation>
    <scope>NUCLEOTIDE SEQUENCE [GENOMIC RNA]</scope>
    <source>
        <strain>Vaccine</strain>
    </source>
</reference>
<evidence type="ECO:0000305" key="1"/>
<organismHost>
    <name type="scientific">Camelus dromedarius</name>
    <name type="common">Dromedary</name>
    <name type="synonym">Arabian camel</name>
    <dbReference type="NCBI Taxonomy" id="9838"/>
</organismHost>
<organismHost>
    <name type="scientific">Canis lupus familiaris</name>
    <name type="common">Dog</name>
    <name type="synonym">Canis familiaris</name>
    <dbReference type="NCBI Taxonomy" id="9615"/>
</organismHost>
<organismHost>
    <name type="scientific">Equus asinus</name>
    <name type="common">Donkey</name>
    <name type="synonym">Equus africanus asinus</name>
    <dbReference type="NCBI Taxonomy" id="9793"/>
</organismHost>
<organismHost>
    <name type="scientific">Equus caballus</name>
    <name type="common">Horse</name>
    <dbReference type="NCBI Taxonomy" id="9796"/>
</organismHost>
<organismHost>
    <name type="scientific">Equus hemionus</name>
    <name type="common">Onager</name>
    <name type="synonym">Asian wild ass</name>
    <dbReference type="NCBI Taxonomy" id="9794"/>
</organismHost>
<organismHost>
    <name type="scientific">Equus quagga burchellii</name>
    <name type="common">Burchell's zebra</name>
    <name type="synonym">Equus burchelli</name>
    <dbReference type="NCBI Taxonomy" id="89252"/>
</organismHost>
<organismHost>
    <name type="scientific">Loxodonta africana</name>
    <name type="common">African elephant</name>
    <dbReference type="NCBI Taxonomy" id="9785"/>
</organismHost>
<organism>
    <name type="scientific">African horse sickness virus 4</name>
    <name type="common">AHSV-4</name>
    <dbReference type="NCBI Taxonomy" id="36421"/>
    <lineage>
        <taxon>Viruses</taxon>
        <taxon>Riboviria</taxon>
        <taxon>Orthornavirae</taxon>
        <taxon>Duplornaviricota</taxon>
        <taxon>Resentoviricetes</taxon>
        <taxon>Reovirales</taxon>
        <taxon>Sedoreoviridae</taxon>
        <taxon>Orbivirus</taxon>
        <taxon>African horse sickness virus</taxon>
    </lineage>
</organism>
<protein>
    <recommendedName>
        <fullName>Non-structural protein NS1</fullName>
    </recommendedName>
    <alternativeName>
        <fullName>Hydrophobic tubular protein</fullName>
    </alternativeName>
</protein>
<comment type="similarity">
    <text evidence="1">Belongs to the orbivirus non-structural protein NS1 family.</text>
</comment>
<dbReference type="EMBL" id="D11390">
    <property type="protein sequence ID" value="BAA01986.1"/>
    <property type="molecule type" value="Genomic_RNA"/>
</dbReference>
<dbReference type="PIR" id="JQ1640">
    <property type="entry name" value="JQ1640"/>
</dbReference>
<dbReference type="SMR" id="Q03068"/>
<dbReference type="InterPro" id="IPR002630">
    <property type="entry name" value="Orbi_NS1"/>
</dbReference>
<dbReference type="Pfam" id="PF01718">
    <property type="entry name" value="Orbi_NS1"/>
    <property type="match status" value="1"/>
</dbReference>
<sequence>MDKFLTYFQVRGERANAVRLFGEISEQIDCSHLKRDCFVNGICARQHFKECCNIATDNGSRTNADKLVALALRALLDRQTIWTCVIKNADYVSQYADEQMEEEVNKLYDVYLQSGTREEFEGFRQRNRPSRVVMDDSCSMLSYFYIPMNQGNPAPVAKLSRWGQFGICYYDRTNVDGLIPYDEIGLAQAIDGLKDLIEGRLPVCPYTGANGRINAVLHLPLEMEVIMAVQENATQLMRRAAQDFKFITHAGWKLYPRLLRQRFAIEDATEGVIHHVMLGHLRYYDEDTSIVKYRFLNDGSLDWRTWTIPLHLMRTARLGHLQPESILVFMHKKLTCQVCFMVDLAMLDTIPVVDSKVAELTGGTDVFYTRAYVHADNHKVPNVRDLMMNEVFRKIDDHWVIQKCHTTKEAITVTAIQIQRSIRGDGQWDTPMFHQSMALLTRLIVYWLTDVTERSAIFRLTCFAIFGCKPTARGRYIDWDDLGTFLKNVLDGRDLTVLEDETCFISMMRMAMLHVQRSKAVCATVLEAPLEIQQVGQIVEVPFDFMHN</sequence>
<feature type="chain" id="PRO_0000222670" description="Non-structural protein NS1">
    <location>
        <begin position="1"/>
        <end position="548"/>
    </location>
</feature>
<name>VNS1_AHSV4</name>
<gene>
    <name type="primary">Segment-5</name>
</gene>
<proteinExistence type="inferred from homology"/>